<dbReference type="EMBL" id="D89677">
    <property type="protein sequence ID" value="BAA19686.2"/>
    <property type="molecule type" value="mRNA"/>
</dbReference>
<dbReference type="EMBL" id="AC133508">
    <property type="status" value="NOT_ANNOTATED_CDS"/>
    <property type="molecule type" value="Genomic_DNA"/>
</dbReference>
<dbReference type="EMBL" id="BC012633">
    <property type="protein sequence ID" value="AAH12633.1"/>
    <property type="status" value="ALT_SEQ"/>
    <property type="molecule type" value="mRNA"/>
</dbReference>
<dbReference type="EMBL" id="BC031117">
    <property type="protein sequence ID" value="AAH31117.1"/>
    <property type="status" value="ALT_INIT"/>
    <property type="molecule type" value="mRNA"/>
</dbReference>
<dbReference type="EMBL" id="AF003234">
    <property type="protein sequence ID" value="AAB82091.1"/>
    <property type="status" value="ALT_SEQ"/>
    <property type="molecule type" value="mRNA"/>
</dbReference>
<dbReference type="EMBL" id="AK050185">
    <property type="protein sequence ID" value="BAC34114.1"/>
    <property type="molecule type" value="mRNA"/>
</dbReference>
<dbReference type="RefSeq" id="NP_001075883.2">
    <property type="nucleotide sequence ID" value="NM_001082414.2"/>
</dbReference>
<dbReference type="SMR" id="Q91X43"/>
<dbReference type="BioGRID" id="205114">
    <property type="interactions" value="5"/>
</dbReference>
<dbReference type="FunCoup" id="Q91X43">
    <property type="interactions" value="1040"/>
</dbReference>
<dbReference type="IntAct" id="Q91X43">
    <property type="interactions" value="2"/>
</dbReference>
<dbReference type="STRING" id="10090.ENSMUSP00000158775"/>
<dbReference type="GlyGen" id="Q91X43">
    <property type="glycosylation" value="1 site"/>
</dbReference>
<dbReference type="iPTMnet" id="Q91X43"/>
<dbReference type="PhosphoSitePlus" id="Q91X43"/>
<dbReference type="jPOST" id="Q91X43"/>
<dbReference type="PaxDb" id="10090-ENSMUSP00000138320"/>
<dbReference type="PeptideAtlas" id="Q91X43"/>
<dbReference type="ProteomicsDB" id="255402">
    <molecule id="Q91X43-1"/>
</dbReference>
<dbReference type="ProteomicsDB" id="255403">
    <molecule id="Q91X43-2"/>
</dbReference>
<dbReference type="Pumba" id="Q91X43"/>
<dbReference type="Antibodypedia" id="2969">
    <property type="antibodies" value="100 antibodies from 19 providers"/>
</dbReference>
<dbReference type="Ensembl" id="ENSMUST00000107664.3">
    <molecule id="Q91X43-1"/>
    <property type="protein sequence ID" value="ENSMUSP00000103291.3"/>
    <property type="gene ID" value="ENSMUSG00000028082.15"/>
</dbReference>
<dbReference type="Ensembl" id="ENSMUST00000182666.8">
    <molecule id="Q91X43-1"/>
    <property type="protein sequence ID" value="ENSMUSP00000138320.2"/>
    <property type="gene ID" value="ENSMUSG00000028082.15"/>
</dbReference>
<dbReference type="Ensembl" id="ENSMUST00000238222.2">
    <molecule id="Q91X43-1"/>
    <property type="protein sequence ID" value="ENSMUSP00000158775.2"/>
    <property type="gene ID" value="ENSMUSG00000028082.15"/>
</dbReference>
<dbReference type="Ensembl" id="ENSMUST00000238331.2">
    <molecule id="Q91X43-1"/>
    <property type="protein sequence ID" value="ENSMUSP00000158600.2"/>
    <property type="gene ID" value="ENSMUSG00000028082.15"/>
</dbReference>
<dbReference type="GeneID" id="27059"/>
<dbReference type="KEGG" id="mmu:27059"/>
<dbReference type="UCSC" id="uc008pra.2">
    <molecule id="Q91X43-1"/>
    <property type="organism name" value="mouse"/>
</dbReference>
<dbReference type="AGR" id="MGI:1350923"/>
<dbReference type="CTD" id="152503"/>
<dbReference type="MGI" id="MGI:1350923">
    <property type="gene designation" value="Sh3d19"/>
</dbReference>
<dbReference type="VEuPathDB" id="HostDB:ENSMUSG00000028082"/>
<dbReference type="eggNOG" id="KOG4225">
    <property type="taxonomic scope" value="Eukaryota"/>
</dbReference>
<dbReference type="GeneTree" id="ENSGT00940000155694"/>
<dbReference type="HOGENOM" id="CLU_015305_2_0_1"/>
<dbReference type="InParanoid" id="Q91X43"/>
<dbReference type="OMA" id="VHKSCMK"/>
<dbReference type="PhylomeDB" id="Q91X43"/>
<dbReference type="TreeFam" id="TF330850"/>
<dbReference type="Reactome" id="R-MMU-432722">
    <property type="pathway name" value="Golgi Associated Vesicle Biogenesis"/>
</dbReference>
<dbReference type="BioGRID-ORCS" id="27059">
    <property type="hits" value="3 hits in 76 CRISPR screens"/>
</dbReference>
<dbReference type="ChiTaRS" id="Sh3d19">
    <property type="organism name" value="mouse"/>
</dbReference>
<dbReference type="PRO" id="PR:Q91X43"/>
<dbReference type="Proteomes" id="UP000000589">
    <property type="component" value="Chromosome 3"/>
</dbReference>
<dbReference type="RNAct" id="Q91X43">
    <property type="molecule type" value="protein"/>
</dbReference>
<dbReference type="Bgee" id="ENSMUSG00000028082">
    <property type="expression patterns" value="Expressed in choroid plexus epithelium and 259 other cell types or tissues"/>
</dbReference>
<dbReference type="ExpressionAtlas" id="Q91X43">
    <property type="expression patterns" value="baseline and differential"/>
</dbReference>
<dbReference type="GO" id="GO:0005737">
    <property type="term" value="C:cytoplasm"/>
    <property type="evidence" value="ECO:0007669"/>
    <property type="project" value="UniProtKB-SubCell"/>
</dbReference>
<dbReference type="GO" id="GO:0007010">
    <property type="term" value="P:cytoskeleton organization"/>
    <property type="evidence" value="ECO:0000250"/>
    <property type="project" value="UniProtKB"/>
</dbReference>
<dbReference type="GO" id="GO:0022604">
    <property type="term" value="P:regulation of cell morphogenesis"/>
    <property type="evidence" value="ECO:0000250"/>
    <property type="project" value="UniProtKB"/>
</dbReference>
<dbReference type="CDD" id="cd11814">
    <property type="entry name" value="SH3_Eve1_1"/>
    <property type="match status" value="1"/>
</dbReference>
<dbReference type="CDD" id="cd11816">
    <property type="entry name" value="SH3_Eve1_3"/>
    <property type="match status" value="1"/>
</dbReference>
<dbReference type="FunFam" id="2.30.30.40:FF:000240">
    <property type="entry name" value="SH3 domain containing 19"/>
    <property type="match status" value="1"/>
</dbReference>
<dbReference type="FunFam" id="2.30.30.40:FF:000072">
    <property type="entry name" value="Unconventional Myosin IB"/>
    <property type="match status" value="1"/>
</dbReference>
<dbReference type="Gene3D" id="2.30.30.40">
    <property type="entry name" value="SH3 Domains"/>
    <property type="match status" value="4"/>
</dbReference>
<dbReference type="InterPro" id="IPR050384">
    <property type="entry name" value="Endophilin_SH3RF"/>
</dbReference>
<dbReference type="InterPro" id="IPR035834">
    <property type="entry name" value="Eve1_SH3_1"/>
</dbReference>
<dbReference type="InterPro" id="IPR035835">
    <property type="entry name" value="Eve1_SH3_3"/>
</dbReference>
<dbReference type="InterPro" id="IPR036028">
    <property type="entry name" value="SH3-like_dom_sf"/>
</dbReference>
<dbReference type="InterPro" id="IPR001452">
    <property type="entry name" value="SH3_domain"/>
</dbReference>
<dbReference type="PANTHER" id="PTHR14167">
    <property type="entry name" value="SH3 DOMAIN-CONTAINING"/>
    <property type="match status" value="1"/>
</dbReference>
<dbReference type="PANTHER" id="PTHR14167:SF48">
    <property type="entry name" value="SH3 DOMAIN-CONTAINING PROTEIN 19"/>
    <property type="match status" value="1"/>
</dbReference>
<dbReference type="Pfam" id="PF00018">
    <property type="entry name" value="SH3_1"/>
    <property type="match status" value="3"/>
</dbReference>
<dbReference type="Pfam" id="PF07653">
    <property type="entry name" value="SH3_2"/>
    <property type="match status" value="1"/>
</dbReference>
<dbReference type="Pfam" id="PF14604">
    <property type="entry name" value="SH3_9"/>
    <property type="match status" value="1"/>
</dbReference>
<dbReference type="PRINTS" id="PR00499">
    <property type="entry name" value="P67PHOX"/>
</dbReference>
<dbReference type="PRINTS" id="PR00452">
    <property type="entry name" value="SH3DOMAIN"/>
</dbReference>
<dbReference type="SMART" id="SM00326">
    <property type="entry name" value="SH3"/>
    <property type="match status" value="5"/>
</dbReference>
<dbReference type="SUPFAM" id="SSF50044">
    <property type="entry name" value="SH3-domain"/>
    <property type="match status" value="5"/>
</dbReference>
<dbReference type="PROSITE" id="PS50002">
    <property type="entry name" value="SH3"/>
    <property type="match status" value="5"/>
</dbReference>
<accession>Q91X43</accession>
<accession>O08635</accession>
<accession>O35146</accession>
<accession>Q8C7I2</accession>
<organism>
    <name type="scientific">Mus musculus</name>
    <name type="common">Mouse</name>
    <dbReference type="NCBI Taxonomy" id="10090"/>
    <lineage>
        <taxon>Eukaryota</taxon>
        <taxon>Metazoa</taxon>
        <taxon>Chordata</taxon>
        <taxon>Craniata</taxon>
        <taxon>Vertebrata</taxon>
        <taxon>Euteleostomi</taxon>
        <taxon>Mammalia</taxon>
        <taxon>Eutheria</taxon>
        <taxon>Euarchontoglires</taxon>
        <taxon>Glires</taxon>
        <taxon>Rodentia</taxon>
        <taxon>Myomorpha</taxon>
        <taxon>Muroidea</taxon>
        <taxon>Muridae</taxon>
        <taxon>Murinae</taxon>
        <taxon>Mus</taxon>
        <taxon>Mus</taxon>
    </lineage>
</organism>
<gene>
    <name type="primary">Sh3d19</name>
</gene>
<proteinExistence type="evidence at protein level"/>
<evidence type="ECO:0000250" key="1"/>
<evidence type="ECO:0000255" key="2">
    <source>
        <dbReference type="PROSITE-ProRule" id="PRU00192"/>
    </source>
</evidence>
<evidence type="ECO:0000256" key="3">
    <source>
        <dbReference type="SAM" id="MobiDB-lite"/>
    </source>
</evidence>
<evidence type="ECO:0000269" key="4">
    <source>
    </source>
</evidence>
<evidence type="ECO:0000303" key="5">
    <source>
    </source>
</evidence>
<evidence type="ECO:0000305" key="6"/>
<evidence type="ECO:0007744" key="7">
    <source>
    </source>
</evidence>
<evidence type="ECO:0007744" key="8">
    <source>
    </source>
</evidence>
<protein>
    <recommendedName>
        <fullName>SH3 domain-containing protein 19</fullName>
    </recommendedName>
    <alternativeName>
        <fullName>Kryn</fullName>
    </alternativeName>
</protein>
<feature type="chain" id="PRO_0000318198" description="SH3 domain-containing protein 19">
    <location>
        <begin position="1"/>
        <end position="789"/>
    </location>
</feature>
<feature type="domain" description="SH3 1" evidence="2">
    <location>
        <begin position="414"/>
        <end position="476"/>
    </location>
</feature>
<feature type="domain" description="SH3 2" evidence="2">
    <location>
        <begin position="494"/>
        <end position="553"/>
    </location>
</feature>
<feature type="domain" description="SH3 3" evidence="2">
    <location>
        <begin position="570"/>
        <end position="629"/>
    </location>
</feature>
<feature type="domain" description="SH3 4" evidence="2">
    <location>
        <begin position="660"/>
        <end position="719"/>
    </location>
</feature>
<feature type="domain" description="SH3 5" evidence="2">
    <location>
        <begin position="729"/>
        <end position="788"/>
    </location>
</feature>
<feature type="region of interest" description="Disordered" evidence="3">
    <location>
        <begin position="24"/>
        <end position="170"/>
    </location>
</feature>
<feature type="region of interest" description="Disordered" evidence="3">
    <location>
        <begin position="209"/>
        <end position="404"/>
    </location>
</feature>
<feature type="region of interest" description="Disordered" evidence="3">
    <location>
        <begin position="472"/>
        <end position="497"/>
    </location>
</feature>
<feature type="region of interest" description="Disordered" evidence="3">
    <location>
        <begin position="635"/>
        <end position="663"/>
    </location>
</feature>
<feature type="compositionally biased region" description="Basic and acidic residues" evidence="3">
    <location>
        <begin position="296"/>
        <end position="305"/>
    </location>
</feature>
<feature type="compositionally biased region" description="Pro residues" evidence="3">
    <location>
        <begin position="335"/>
        <end position="351"/>
    </location>
</feature>
<feature type="compositionally biased region" description="Low complexity" evidence="3">
    <location>
        <begin position="352"/>
        <end position="361"/>
    </location>
</feature>
<feature type="compositionally biased region" description="Basic and acidic residues" evidence="3">
    <location>
        <begin position="474"/>
        <end position="484"/>
    </location>
</feature>
<feature type="modified residue" description="Phosphoserine" evidence="7 8">
    <location>
        <position position="65"/>
    </location>
</feature>
<feature type="modified residue" description="Phosphoserine" evidence="8">
    <location>
        <position position="368"/>
    </location>
</feature>
<feature type="splice variant" id="VSP_031185" description="In isoform 2." evidence="5">
    <location>
        <begin position="1"/>
        <end position="369"/>
    </location>
</feature>
<feature type="sequence conflict" description="In Ref. 5; BAC34114." evidence="6" ref="5">
    <original>S</original>
    <variation>G</variation>
    <location>
        <position position="559"/>
    </location>
</feature>
<keyword id="KW-0025">Alternative splicing</keyword>
<keyword id="KW-0963">Cytoplasm</keyword>
<keyword id="KW-0597">Phosphoprotein</keyword>
<keyword id="KW-1185">Reference proteome</keyword>
<keyword id="KW-0677">Repeat</keyword>
<keyword id="KW-0728">SH3 domain</keyword>
<name>SH319_MOUSE</name>
<comment type="function">
    <text evidence="1">May play a role in regulating A disintegrin and metalloproteases (ADAMs) in the signaling of EGFR-ligand shedding. May be involved in suppression of Ras-induced cellular transformation and Ras-mediated activation of ELK1. Plays a role in the regulation of cell morphology and cytoskeletal organization (By similarity).</text>
</comment>
<comment type="subunit">
    <text evidence="1 4">Interacts with ADAM12. Isoform 2 (but not isoform 1) interacts with ADAM9, ADAM10, ADAM15 and ADAM17. Interacts with SH3GL1 SH3 domain. Interacts via SH3 3 and SH3 4 or SH3 4 and SH3 5 domains with SOS2. Probably forms a trimeric complex with SH3GL1 and SOS2 (By similarity). Interacts with SH3YL1.</text>
</comment>
<comment type="interaction">
    <interactant intactId="EBI-2024543">
        <id>Q91X43</id>
    </interactant>
    <interactant intactId="EBI-2024519">
        <id>O08641</id>
        <label>Sh3yl1</label>
    </interactant>
    <organismsDiffer>false</organismsDiffer>
    <experiments>3</experiments>
</comment>
<comment type="subcellular location">
    <subcellularLocation>
        <location evidence="1">Cytoplasm</location>
    </subcellularLocation>
</comment>
<comment type="alternative products">
    <event type="alternative splicing"/>
    <isoform>
        <id>Q91X43-1</id>
        <name>1</name>
        <sequence type="displayed"/>
    </isoform>
    <isoform>
        <id>Q91X43-2</id>
        <name>2</name>
        <sequence type="described" ref="VSP_031185"/>
    </isoform>
</comment>
<comment type="tissue specificity">
    <text evidence="4">Expressed in hair follicles.</text>
</comment>
<comment type="caution">
    <text evidence="6">It is uncertain whether Met-1 or Met-4 is the initiator.</text>
</comment>
<comment type="sequence caution" evidence="6">
    <conflict type="miscellaneous discrepancy">
        <sequence resource="EMBL-CDS" id="AAB82091"/>
    </conflict>
    <text>Sequence contamination. Potential vector sequence.</text>
</comment>
<comment type="sequence caution" evidence="6">
    <conflict type="miscellaneous discrepancy">
        <sequence resource="EMBL-CDS" id="AAH12633"/>
    </conflict>
    <text>Sequence contamination. Potential vector sequence.</text>
</comment>
<comment type="sequence caution" evidence="6">
    <conflict type="erroneous initiation">
        <sequence resource="EMBL-CDS" id="AAH31117"/>
    </conflict>
</comment>
<reference key="1">
    <citation type="journal article" date="2003" name="J. Dermatol. Sci.">
        <title>Gene expression of Sh3d19, a novel adaptor protein with five Src homology 3 domains, in anagen mouse hair follicles.</title>
        <authorList>
            <person name="Shimomura Y."/>
            <person name="Aoki N."/>
            <person name="Ito K."/>
            <person name="Ito M."/>
        </authorList>
    </citation>
    <scope>NUCLEOTIDE SEQUENCE [MRNA] (ISOFORM 2)</scope>
    <scope>TISSUE SPECIFICITY</scope>
    <scope>INTERACTION WITH SH3YL1</scope>
</reference>
<reference key="2">
    <citation type="journal article" date="2009" name="PLoS Biol.">
        <title>Lineage-specific biology revealed by a finished genome assembly of the mouse.</title>
        <authorList>
            <person name="Church D.M."/>
            <person name="Goodstadt L."/>
            <person name="Hillier L.W."/>
            <person name="Zody M.C."/>
            <person name="Goldstein S."/>
            <person name="She X."/>
            <person name="Bult C.J."/>
            <person name="Agarwala R."/>
            <person name="Cherry J.L."/>
            <person name="DiCuccio M."/>
            <person name="Hlavina W."/>
            <person name="Kapustin Y."/>
            <person name="Meric P."/>
            <person name="Maglott D."/>
            <person name="Birtle Z."/>
            <person name="Marques A.C."/>
            <person name="Graves T."/>
            <person name="Zhou S."/>
            <person name="Teague B."/>
            <person name="Potamousis K."/>
            <person name="Churas C."/>
            <person name="Place M."/>
            <person name="Herschleb J."/>
            <person name="Runnheim R."/>
            <person name="Forrest D."/>
            <person name="Amos-Landgraf J."/>
            <person name="Schwartz D.C."/>
            <person name="Cheng Z."/>
            <person name="Lindblad-Toh K."/>
            <person name="Eichler E.E."/>
            <person name="Ponting C.P."/>
        </authorList>
    </citation>
    <scope>NUCLEOTIDE SEQUENCE [LARGE SCALE GENOMIC DNA]</scope>
    <source>
        <strain>C57BL/6J</strain>
    </source>
</reference>
<reference key="3">
    <citation type="journal article" date="2004" name="Genome Res.">
        <title>The status, quality, and expansion of the NIH full-length cDNA project: the Mammalian Gene Collection (MGC).</title>
        <authorList>
            <consortium name="The MGC Project Team"/>
        </authorList>
    </citation>
    <scope>NUCLEOTIDE SEQUENCE [LARGE SCALE MRNA] OF 13-789 (ISOFORM 1)</scope>
    <source>
        <strain>FVB/N</strain>
        <tissue>Colon</tissue>
        <tissue>Kidney</tissue>
    </source>
</reference>
<reference key="4">
    <citation type="submission" date="1997-05" db="EMBL/GenBank/DDBJ databases">
        <authorList>
            <person name="Sekely S.A."/>
            <person name="Kay B.K."/>
        </authorList>
    </citation>
    <scope>NUCLEOTIDE SEQUENCE [MRNA] OF 465-789</scope>
</reference>
<reference key="5">
    <citation type="journal article" date="2005" name="Science">
        <title>The transcriptional landscape of the mammalian genome.</title>
        <authorList>
            <person name="Carninci P."/>
            <person name="Kasukawa T."/>
            <person name="Katayama S."/>
            <person name="Gough J."/>
            <person name="Frith M.C."/>
            <person name="Maeda N."/>
            <person name="Oyama R."/>
            <person name="Ravasi T."/>
            <person name="Lenhard B."/>
            <person name="Wells C."/>
            <person name="Kodzius R."/>
            <person name="Shimokawa K."/>
            <person name="Bajic V.B."/>
            <person name="Brenner S.E."/>
            <person name="Batalov S."/>
            <person name="Forrest A.R."/>
            <person name="Zavolan M."/>
            <person name="Davis M.J."/>
            <person name="Wilming L.G."/>
            <person name="Aidinis V."/>
            <person name="Allen J.E."/>
            <person name="Ambesi-Impiombato A."/>
            <person name="Apweiler R."/>
            <person name="Aturaliya R.N."/>
            <person name="Bailey T.L."/>
            <person name="Bansal M."/>
            <person name="Baxter L."/>
            <person name="Beisel K.W."/>
            <person name="Bersano T."/>
            <person name="Bono H."/>
            <person name="Chalk A.M."/>
            <person name="Chiu K.P."/>
            <person name="Choudhary V."/>
            <person name="Christoffels A."/>
            <person name="Clutterbuck D.R."/>
            <person name="Crowe M.L."/>
            <person name="Dalla E."/>
            <person name="Dalrymple B.P."/>
            <person name="de Bono B."/>
            <person name="Della Gatta G."/>
            <person name="di Bernardo D."/>
            <person name="Down T."/>
            <person name="Engstrom P."/>
            <person name="Fagiolini M."/>
            <person name="Faulkner G."/>
            <person name="Fletcher C.F."/>
            <person name="Fukushima T."/>
            <person name="Furuno M."/>
            <person name="Futaki S."/>
            <person name="Gariboldi M."/>
            <person name="Georgii-Hemming P."/>
            <person name="Gingeras T.R."/>
            <person name="Gojobori T."/>
            <person name="Green R.E."/>
            <person name="Gustincich S."/>
            <person name="Harbers M."/>
            <person name="Hayashi Y."/>
            <person name="Hensch T.K."/>
            <person name="Hirokawa N."/>
            <person name="Hill D."/>
            <person name="Huminiecki L."/>
            <person name="Iacono M."/>
            <person name="Ikeo K."/>
            <person name="Iwama A."/>
            <person name="Ishikawa T."/>
            <person name="Jakt M."/>
            <person name="Kanapin A."/>
            <person name="Katoh M."/>
            <person name="Kawasawa Y."/>
            <person name="Kelso J."/>
            <person name="Kitamura H."/>
            <person name="Kitano H."/>
            <person name="Kollias G."/>
            <person name="Krishnan S.P."/>
            <person name="Kruger A."/>
            <person name="Kummerfeld S.K."/>
            <person name="Kurochkin I.V."/>
            <person name="Lareau L.F."/>
            <person name="Lazarevic D."/>
            <person name="Lipovich L."/>
            <person name="Liu J."/>
            <person name="Liuni S."/>
            <person name="McWilliam S."/>
            <person name="Madan Babu M."/>
            <person name="Madera M."/>
            <person name="Marchionni L."/>
            <person name="Matsuda H."/>
            <person name="Matsuzawa S."/>
            <person name="Miki H."/>
            <person name="Mignone F."/>
            <person name="Miyake S."/>
            <person name="Morris K."/>
            <person name="Mottagui-Tabar S."/>
            <person name="Mulder N."/>
            <person name="Nakano N."/>
            <person name="Nakauchi H."/>
            <person name="Ng P."/>
            <person name="Nilsson R."/>
            <person name="Nishiguchi S."/>
            <person name="Nishikawa S."/>
            <person name="Nori F."/>
            <person name="Ohara O."/>
            <person name="Okazaki Y."/>
            <person name="Orlando V."/>
            <person name="Pang K.C."/>
            <person name="Pavan W.J."/>
            <person name="Pavesi G."/>
            <person name="Pesole G."/>
            <person name="Petrovsky N."/>
            <person name="Piazza S."/>
            <person name="Reed J."/>
            <person name="Reid J.F."/>
            <person name="Ring B.Z."/>
            <person name="Ringwald M."/>
            <person name="Rost B."/>
            <person name="Ruan Y."/>
            <person name="Salzberg S.L."/>
            <person name="Sandelin A."/>
            <person name="Schneider C."/>
            <person name="Schoenbach C."/>
            <person name="Sekiguchi K."/>
            <person name="Semple C.A."/>
            <person name="Seno S."/>
            <person name="Sessa L."/>
            <person name="Sheng Y."/>
            <person name="Shibata Y."/>
            <person name="Shimada H."/>
            <person name="Shimada K."/>
            <person name="Silva D."/>
            <person name="Sinclair B."/>
            <person name="Sperling S."/>
            <person name="Stupka E."/>
            <person name="Sugiura K."/>
            <person name="Sultana R."/>
            <person name="Takenaka Y."/>
            <person name="Taki K."/>
            <person name="Tammoja K."/>
            <person name="Tan S.L."/>
            <person name="Tang S."/>
            <person name="Taylor M.S."/>
            <person name="Tegner J."/>
            <person name="Teichmann S.A."/>
            <person name="Ueda H.R."/>
            <person name="van Nimwegen E."/>
            <person name="Verardo R."/>
            <person name="Wei C.L."/>
            <person name="Yagi K."/>
            <person name="Yamanishi H."/>
            <person name="Zabarovsky E."/>
            <person name="Zhu S."/>
            <person name="Zimmer A."/>
            <person name="Hide W."/>
            <person name="Bult C."/>
            <person name="Grimmond S.M."/>
            <person name="Teasdale R.D."/>
            <person name="Liu E.T."/>
            <person name="Brusic V."/>
            <person name="Quackenbush J."/>
            <person name="Wahlestedt C."/>
            <person name="Mattick J.S."/>
            <person name="Hume D.A."/>
            <person name="Kai C."/>
            <person name="Sasaki D."/>
            <person name="Tomaru Y."/>
            <person name="Fukuda S."/>
            <person name="Kanamori-Katayama M."/>
            <person name="Suzuki M."/>
            <person name="Aoki J."/>
            <person name="Arakawa T."/>
            <person name="Iida J."/>
            <person name="Imamura K."/>
            <person name="Itoh M."/>
            <person name="Kato T."/>
            <person name="Kawaji H."/>
            <person name="Kawagashira N."/>
            <person name="Kawashima T."/>
            <person name="Kojima M."/>
            <person name="Kondo S."/>
            <person name="Konno H."/>
            <person name="Nakano K."/>
            <person name="Ninomiya N."/>
            <person name="Nishio T."/>
            <person name="Okada M."/>
            <person name="Plessy C."/>
            <person name="Shibata K."/>
            <person name="Shiraki T."/>
            <person name="Suzuki S."/>
            <person name="Tagami M."/>
            <person name="Waki K."/>
            <person name="Watahiki A."/>
            <person name="Okamura-Oho Y."/>
            <person name="Suzuki H."/>
            <person name="Kawai J."/>
            <person name="Hayashizaki Y."/>
        </authorList>
    </citation>
    <scope>NUCLEOTIDE SEQUENCE [LARGE SCALE MRNA] OF 505-789</scope>
    <source>
        <strain>C57BL/6J</strain>
        <tissue>Liver</tissue>
    </source>
</reference>
<reference key="6">
    <citation type="journal article" date="2007" name="Proc. Natl. Acad. Sci. U.S.A.">
        <title>Large-scale phosphorylation analysis of mouse liver.</title>
        <authorList>
            <person name="Villen J."/>
            <person name="Beausoleil S.A."/>
            <person name="Gerber S.A."/>
            <person name="Gygi S.P."/>
        </authorList>
    </citation>
    <scope>PHOSPHORYLATION [LARGE SCALE ANALYSIS] AT SER-65</scope>
    <scope>IDENTIFICATION BY MASS SPECTROMETRY [LARGE SCALE ANALYSIS]</scope>
    <source>
        <tissue>Liver</tissue>
    </source>
</reference>
<reference key="7">
    <citation type="journal article" date="2010" name="Cell">
        <title>A tissue-specific atlas of mouse protein phosphorylation and expression.</title>
        <authorList>
            <person name="Huttlin E.L."/>
            <person name="Jedrychowski M.P."/>
            <person name="Elias J.E."/>
            <person name="Goswami T."/>
            <person name="Rad R."/>
            <person name="Beausoleil S.A."/>
            <person name="Villen J."/>
            <person name="Haas W."/>
            <person name="Sowa M.E."/>
            <person name="Gygi S.P."/>
        </authorList>
    </citation>
    <scope>PHOSPHORYLATION [LARGE SCALE ANALYSIS] AT SER-65 AND SER-368</scope>
    <scope>IDENTIFICATION BY MASS SPECTROMETRY [LARGE SCALE ANALYSIS]</scope>
    <source>
        <tissue>Brain</tissue>
        <tissue>Lung</tissue>
        <tissue>Spleen</tissue>
    </source>
</reference>
<sequence length="789" mass="86077">MNIMNTEQSQNTIVSRIKAFEGQTNTEIPGLPKKPEIIPRTIPPKPAVSSGKPLVAPKPAANRASGEWDTWAENRLKVTSREGLTPYSSPQEAGITPVTKPELPKKPTPGLTRSVNHETSGGRPMAESPDTGKKIPTPAPRPLLPKKSASTDAPPYPSIPPKLVSAPPRLSVASQAKAFRSLGEGLPSNPPVPAPQSKALGDIDLISFDDDVLPTSGSPAEEPTGSETVLDPFQLPTKTEATKERAVQPAPTRKPTVIRIPAKPGKCLHEEPQSPPPLPAEKPVGNTHSAVSGRPSHSDRTRNPELEQASESGGLVQGPPRLPPRPVHGKVIPVWRPPPKGAPERPPPPKLPASKSSNKNLPFNRSSSDMDLQKKQSHFVSGLSKAKSQIFKNQDPVLPPRPKPGHPLYRKYMLSVPHGIANEDIVSRNPTELSCKRGDVLVILKQAENNYLECQRGEGTGRVHPSQMKIVTPLDERPRGRPNDSGHSQKPVDSGAPHAVALHDFPAEQADDLSLTSGEIVYLLEKIDAEWYRGKCRNQTGVFPANYVKVIVDIPEGRSGKRESFSSHCAKGPRCVARFEYIGDQKDELSFSEGEVIILTEYVNEEWGRGEIRDRSGIFPLNFVELVGDHPTSGANILSTKVPPKTKNEDPGSNSQDSSPPGEWCKALHSFTAETSEDLPFKRGDRILILERLDSDWYRGRLHDREGIFPAVFVQPCPAEAKGVASAIPKGRKVKALYDFLGENEDELSFKAGDVITELEPIDDAWMRGELMGRAGMFPKNYVQFLQVS</sequence>